<organism>
    <name type="scientific">Aspergillus flavus (strain ATCC 200026 / FGSC A1120 / IAM 13836 / NRRL 3357 / JCM 12722 / SRRC 167)</name>
    <dbReference type="NCBI Taxonomy" id="332952"/>
    <lineage>
        <taxon>Eukaryota</taxon>
        <taxon>Fungi</taxon>
        <taxon>Dikarya</taxon>
        <taxon>Ascomycota</taxon>
        <taxon>Pezizomycotina</taxon>
        <taxon>Eurotiomycetes</taxon>
        <taxon>Eurotiomycetidae</taxon>
        <taxon>Eurotiales</taxon>
        <taxon>Aspergillaceae</taxon>
        <taxon>Aspergillus</taxon>
        <taxon>Aspergillus subgen. Circumdati</taxon>
    </lineage>
</organism>
<protein>
    <recommendedName>
        <fullName>Probable beta-glucosidase G</fullName>
        <ecNumber>3.2.1.21</ecNumber>
    </recommendedName>
    <alternativeName>
        <fullName>Beta-D-glucoside glucohydrolase G</fullName>
    </alternativeName>
    <alternativeName>
        <fullName>Cellobiase G</fullName>
    </alternativeName>
    <alternativeName>
        <fullName>Gentiobiase G</fullName>
    </alternativeName>
</protein>
<comment type="function">
    <text evidence="1">Beta-glucosidases are one of a number of cellulolytic enzymes involved in the degradation of cellulosic biomass. Catalyzes the last step releasing glucose from the inhibitory cellobiose (By similarity).</text>
</comment>
<comment type="catalytic activity">
    <reaction>
        <text>Hydrolysis of terminal, non-reducing beta-D-glucosyl residues with release of beta-D-glucose.</text>
        <dbReference type="EC" id="3.2.1.21"/>
    </reaction>
</comment>
<comment type="pathway">
    <text>Glycan metabolism; cellulose degradation.</text>
</comment>
<comment type="subcellular location">
    <subcellularLocation>
        <location evidence="1">Secreted</location>
    </subcellularLocation>
</comment>
<comment type="similarity">
    <text evidence="3">Belongs to the glycosyl hydrolase 3 family.</text>
</comment>
<reference key="1">
    <citation type="journal article" date="2015" name="Genome Announc.">
        <title>Genome sequence of Aspergillus flavus NRRL 3357, a strain that causes aflatoxin contamination of food and feed.</title>
        <authorList>
            <person name="Nierman W.C."/>
            <person name="Yu J."/>
            <person name="Fedorova-Abrams N.D."/>
            <person name="Losada L."/>
            <person name="Cleveland T.E."/>
            <person name="Bhatnagar D."/>
            <person name="Bennett J.W."/>
            <person name="Dean R."/>
            <person name="Payne G.A."/>
        </authorList>
    </citation>
    <scope>NUCLEOTIDE SEQUENCE [LARGE SCALE GENOMIC DNA]</scope>
    <source>
        <strain>ATCC 200026 / FGSC A1120 / IAM 13836 / NRRL 3357 / JCM 12722 / SRRC 167</strain>
    </source>
</reference>
<feature type="signal peptide" evidence="2">
    <location>
        <begin position="1"/>
        <end position="20"/>
    </location>
</feature>
<feature type="chain" id="PRO_0000394116" description="Probable beta-glucosidase G">
    <location>
        <begin position="21"/>
        <end position="815"/>
    </location>
</feature>
<feature type="active site" evidence="1">
    <location>
        <position position="304"/>
    </location>
</feature>
<feature type="glycosylation site" description="N-linked (GlcNAc...) asparagine" evidence="2">
    <location>
        <position position="40"/>
    </location>
</feature>
<feature type="glycosylation site" description="N-linked (GlcNAc...) asparagine" evidence="2">
    <location>
        <position position="58"/>
    </location>
</feature>
<feature type="glycosylation site" description="N-linked (GlcNAc...) asparagine" evidence="2">
    <location>
        <position position="229"/>
    </location>
</feature>
<feature type="glycosylation site" description="N-linked (GlcNAc...) asparagine" evidence="2">
    <location>
        <position position="276"/>
    </location>
</feature>
<feature type="glycosylation site" description="N-linked (GlcNAc...) asparagine" evidence="2">
    <location>
        <position position="343"/>
    </location>
</feature>
<feature type="glycosylation site" description="N-linked (GlcNAc...) asparagine" evidence="2">
    <location>
        <position position="350"/>
    </location>
</feature>
<feature type="glycosylation site" description="N-linked (GlcNAc...) asparagine" evidence="2">
    <location>
        <position position="402"/>
    </location>
</feature>
<feature type="glycosylation site" description="N-linked (GlcNAc...) asparagine" evidence="2">
    <location>
        <position position="507"/>
    </location>
</feature>
<feature type="glycosylation site" description="N-linked (GlcNAc...) asparagine" evidence="2">
    <location>
        <position position="563"/>
    </location>
</feature>
<feature type="glycosylation site" description="N-linked (GlcNAc...) asparagine" evidence="2">
    <location>
        <position position="584"/>
    </location>
</feature>
<feature type="glycosylation site" description="N-linked (GlcNAc...) asparagine" evidence="2">
    <location>
        <position position="623"/>
    </location>
</feature>
<feature type="glycosylation site" description="N-linked (GlcNAc...) asparagine" evidence="2">
    <location>
        <position position="662"/>
    </location>
</feature>
<feature type="glycosylation site" description="N-linked (GlcNAc...) asparagine" evidence="2">
    <location>
        <position position="715"/>
    </location>
</feature>
<sequence>MASIAHLVVSGLLAATAVNGQNYGGSGRSDDAFSYVQPRNTTILGQYGHSPAVLPSPNATGAGGWEEALAKAQQFVAQLTLEEKADMVTGQPGPCVGNIVAIPRLGFKGLCLQDGPLAIRVADYASVFSAGVTAASTWDKDILYERGVAMGEEFKGKGAHVALGPVAGPLGRSGYGGRNWEGFAADPYLTGVAMERTIQGYQDAGVQACAKHFIGNEQETQRNPNYNPNGTLTDVIQEAISSNIDDRTIHELYLWPFANAARAKVASVMCSYQRLNGSYACQNSKVLNGLLKEELGFQGYVQSDWGGTHSGVSSIEGGLDMNMPGGLGQYGQTPEAGSFFGKNVTFAVNNGTVDISRVDDMIVRIMTPYYWLGQDQGYPEIDPSSADLNTFSPRSTWLREFNLTGERSRDVRGDHGELIRRHGAEATILLKNENKALPLKAPKSIAVFGNDAGDTTEGAVNKATFEFGTLAAGGGSGTGRFTYLVTPLEALKARGKQDNTLVQWWLNNTLIADSDVTSLWVPTPPDACLVFLKTWAEEGSDREYLSVDWNGNEVVDSVASKCNNTIVVTHSSGINELPFANHPNVTAIVAAHYPGQESGNSIVDILYGDVNPSGKLPYTIAKNGSDYNAPPTTAVETTGADDWQAWFDEKLEIDYRYFDAHNISVLYEFGFGLSYTTFSLSDIKTEPLAESISSVPEQLPIQPGGNPALWESVYNVSVTVTNTGDVKGATVPQLYVTFPDSAPAGTPPKQLRGFDKVSLAPGESQTVGFELMRRDLSYWDVVSQEWLIPEGEFTIRVGFSSRDLSQETKITPVTA</sequence>
<keyword id="KW-0119">Carbohydrate metabolism</keyword>
<keyword id="KW-0136">Cellulose degradation</keyword>
<keyword id="KW-0325">Glycoprotein</keyword>
<keyword id="KW-0326">Glycosidase</keyword>
<keyword id="KW-0378">Hydrolase</keyword>
<keyword id="KW-0624">Polysaccharide degradation</keyword>
<keyword id="KW-0964">Secreted</keyword>
<keyword id="KW-0732">Signal</keyword>
<gene>
    <name type="primary">bglG</name>
    <name type="ORF">AFLA_126780</name>
</gene>
<name>BGLG_ASPFN</name>
<accession>B8NMR5</accession>
<evidence type="ECO:0000250" key="1"/>
<evidence type="ECO:0000255" key="2"/>
<evidence type="ECO:0000305" key="3"/>
<proteinExistence type="inferred from homology"/>
<dbReference type="EC" id="3.2.1.21"/>
<dbReference type="EMBL" id="EQ963481">
    <property type="protein sequence ID" value="EED48455.1"/>
    <property type="molecule type" value="Genomic_DNA"/>
</dbReference>
<dbReference type="RefSeq" id="XP_002381871.1">
    <property type="nucleotide sequence ID" value="XM_002381830.1"/>
</dbReference>
<dbReference type="SMR" id="B8NMR5"/>
<dbReference type="STRING" id="332952.B8NMR5"/>
<dbReference type="GlyCosmos" id="B8NMR5">
    <property type="glycosylation" value="13 sites, No reported glycans"/>
</dbReference>
<dbReference type="EnsemblFungi" id="EED48455">
    <property type="protein sequence ID" value="EED48455"/>
    <property type="gene ID" value="AFLA_126780"/>
</dbReference>
<dbReference type="VEuPathDB" id="FungiDB:AFLA_012483"/>
<dbReference type="eggNOG" id="ENOG502QR4D">
    <property type="taxonomic scope" value="Eukaryota"/>
</dbReference>
<dbReference type="HOGENOM" id="CLU_004542_2_3_1"/>
<dbReference type="OMA" id="YERGYAM"/>
<dbReference type="UniPathway" id="UPA00696"/>
<dbReference type="GO" id="GO:0005576">
    <property type="term" value="C:extracellular region"/>
    <property type="evidence" value="ECO:0007669"/>
    <property type="project" value="UniProtKB-SubCell"/>
</dbReference>
<dbReference type="GO" id="GO:0008422">
    <property type="term" value="F:beta-glucosidase activity"/>
    <property type="evidence" value="ECO:0007669"/>
    <property type="project" value="UniProtKB-EC"/>
</dbReference>
<dbReference type="GO" id="GO:0030245">
    <property type="term" value="P:cellulose catabolic process"/>
    <property type="evidence" value="ECO:0007669"/>
    <property type="project" value="UniProtKB-UniPathway"/>
</dbReference>
<dbReference type="FunFam" id="2.60.40.10:FF:000757">
    <property type="entry name" value="Beta-glucosidase G"/>
    <property type="match status" value="1"/>
</dbReference>
<dbReference type="FunFam" id="3.20.20.300:FF:000002">
    <property type="entry name" value="Probable beta-glucosidase"/>
    <property type="match status" value="1"/>
</dbReference>
<dbReference type="FunFam" id="3.40.50.1700:FF:000003">
    <property type="entry name" value="Probable beta-glucosidase"/>
    <property type="match status" value="1"/>
</dbReference>
<dbReference type="Gene3D" id="3.40.50.1700">
    <property type="entry name" value="Glycoside hydrolase family 3 C-terminal domain"/>
    <property type="match status" value="1"/>
</dbReference>
<dbReference type="Gene3D" id="3.20.20.300">
    <property type="entry name" value="Glycoside hydrolase, family 3, N-terminal domain"/>
    <property type="match status" value="1"/>
</dbReference>
<dbReference type="Gene3D" id="2.60.40.10">
    <property type="entry name" value="Immunoglobulins"/>
    <property type="match status" value="1"/>
</dbReference>
<dbReference type="InterPro" id="IPR050288">
    <property type="entry name" value="Cellulose_deg_GH3"/>
</dbReference>
<dbReference type="InterPro" id="IPR026891">
    <property type="entry name" value="Fn3-like"/>
</dbReference>
<dbReference type="InterPro" id="IPR002772">
    <property type="entry name" value="Glyco_hydro_3_C"/>
</dbReference>
<dbReference type="InterPro" id="IPR036881">
    <property type="entry name" value="Glyco_hydro_3_C_sf"/>
</dbReference>
<dbReference type="InterPro" id="IPR001764">
    <property type="entry name" value="Glyco_hydro_3_N"/>
</dbReference>
<dbReference type="InterPro" id="IPR036962">
    <property type="entry name" value="Glyco_hydro_3_N_sf"/>
</dbReference>
<dbReference type="InterPro" id="IPR017853">
    <property type="entry name" value="Glycoside_hydrolase_SF"/>
</dbReference>
<dbReference type="InterPro" id="IPR013783">
    <property type="entry name" value="Ig-like_fold"/>
</dbReference>
<dbReference type="PANTHER" id="PTHR42715">
    <property type="entry name" value="BETA-GLUCOSIDASE"/>
    <property type="match status" value="1"/>
</dbReference>
<dbReference type="PANTHER" id="PTHR42715:SF12">
    <property type="entry name" value="BETA-GLUCOSIDASE G-RELATED"/>
    <property type="match status" value="1"/>
</dbReference>
<dbReference type="Pfam" id="PF14310">
    <property type="entry name" value="Fn3-like"/>
    <property type="match status" value="1"/>
</dbReference>
<dbReference type="Pfam" id="PF00933">
    <property type="entry name" value="Glyco_hydro_3"/>
    <property type="match status" value="1"/>
</dbReference>
<dbReference type="Pfam" id="PF01915">
    <property type="entry name" value="Glyco_hydro_3_C"/>
    <property type="match status" value="1"/>
</dbReference>
<dbReference type="PRINTS" id="PR00133">
    <property type="entry name" value="GLHYDRLASE3"/>
</dbReference>
<dbReference type="SMART" id="SM01217">
    <property type="entry name" value="Fn3_like"/>
    <property type="match status" value="1"/>
</dbReference>
<dbReference type="SUPFAM" id="SSF51445">
    <property type="entry name" value="(Trans)glycosidases"/>
    <property type="match status" value="1"/>
</dbReference>
<dbReference type="SUPFAM" id="SSF52279">
    <property type="entry name" value="Beta-D-glucan exohydrolase, C-terminal domain"/>
    <property type="match status" value="1"/>
</dbReference>